<name>RL31_ACIBY</name>
<sequence length="74" mass="8328">MRADIHPKYEKLVATCSCGNVIETRSALGKETIYLDVCSACHPFYTGKQKNVDTGGRIDKFKQRFAGMSRSIKR</sequence>
<evidence type="ECO:0000255" key="1">
    <source>
        <dbReference type="HAMAP-Rule" id="MF_00501"/>
    </source>
</evidence>
<evidence type="ECO:0000305" key="2"/>
<protein>
    <recommendedName>
        <fullName evidence="1">Large ribosomal subunit protein bL31</fullName>
    </recommendedName>
    <alternativeName>
        <fullName evidence="2">50S ribosomal protein L31</fullName>
    </alternativeName>
</protein>
<keyword id="KW-0479">Metal-binding</keyword>
<keyword id="KW-0687">Ribonucleoprotein</keyword>
<keyword id="KW-0689">Ribosomal protein</keyword>
<keyword id="KW-0694">RNA-binding</keyword>
<keyword id="KW-0699">rRNA-binding</keyword>
<keyword id="KW-0862">Zinc</keyword>
<gene>
    <name evidence="1" type="primary">rpmE</name>
    <name type="ordered locus">ABAYE1054</name>
</gene>
<proteinExistence type="inferred from homology"/>
<accession>B0VBX6</accession>
<feature type="chain" id="PRO_1000126546" description="Large ribosomal subunit protein bL31">
    <location>
        <begin position="1"/>
        <end position="74"/>
    </location>
</feature>
<feature type="binding site" evidence="1">
    <location>
        <position position="16"/>
    </location>
    <ligand>
        <name>Zn(2+)</name>
        <dbReference type="ChEBI" id="CHEBI:29105"/>
    </ligand>
</feature>
<feature type="binding site" evidence="1">
    <location>
        <position position="18"/>
    </location>
    <ligand>
        <name>Zn(2+)</name>
        <dbReference type="ChEBI" id="CHEBI:29105"/>
    </ligand>
</feature>
<feature type="binding site" evidence="1">
    <location>
        <position position="38"/>
    </location>
    <ligand>
        <name>Zn(2+)</name>
        <dbReference type="ChEBI" id="CHEBI:29105"/>
    </ligand>
</feature>
<feature type="binding site" evidence="1">
    <location>
        <position position="41"/>
    </location>
    <ligand>
        <name>Zn(2+)</name>
        <dbReference type="ChEBI" id="CHEBI:29105"/>
    </ligand>
</feature>
<comment type="function">
    <text evidence="1">Binds the 23S rRNA.</text>
</comment>
<comment type="cofactor">
    <cofactor evidence="1">
        <name>Zn(2+)</name>
        <dbReference type="ChEBI" id="CHEBI:29105"/>
    </cofactor>
    <text evidence="1">Binds 1 zinc ion per subunit.</text>
</comment>
<comment type="subunit">
    <text evidence="1">Part of the 50S ribosomal subunit.</text>
</comment>
<comment type="similarity">
    <text evidence="1">Belongs to the bacterial ribosomal protein bL31 family. Type A subfamily.</text>
</comment>
<dbReference type="EMBL" id="CU459141">
    <property type="protein sequence ID" value="CAM85987.1"/>
    <property type="molecule type" value="Genomic_DNA"/>
</dbReference>
<dbReference type="RefSeq" id="WP_001200845.1">
    <property type="nucleotide sequence ID" value="NZ_JBDGFB010000018.1"/>
</dbReference>
<dbReference type="SMR" id="B0VBX6"/>
<dbReference type="EnsemblBacteria" id="CAM85987">
    <property type="protein sequence ID" value="CAM85987"/>
    <property type="gene ID" value="ABAYE1054"/>
</dbReference>
<dbReference type="GeneID" id="92894731"/>
<dbReference type="KEGG" id="aby:ABAYE1054"/>
<dbReference type="HOGENOM" id="CLU_114306_4_3_6"/>
<dbReference type="GO" id="GO:1990904">
    <property type="term" value="C:ribonucleoprotein complex"/>
    <property type="evidence" value="ECO:0007669"/>
    <property type="project" value="UniProtKB-KW"/>
</dbReference>
<dbReference type="GO" id="GO:0005840">
    <property type="term" value="C:ribosome"/>
    <property type="evidence" value="ECO:0007669"/>
    <property type="project" value="UniProtKB-KW"/>
</dbReference>
<dbReference type="GO" id="GO:0046872">
    <property type="term" value="F:metal ion binding"/>
    <property type="evidence" value="ECO:0007669"/>
    <property type="project" value="UniProtKB-KW"/>
</dbReference>
<dbReference type="GO" id="GO:0019843">
    <property type="term" value="F:rRNA binding"/>
    <property type="evidence" value="ECO:0007669"/>
    <property type="project" value="UniProtKB-KW"/>
</dbReference>
<dbReference type="GO" id="GO:0003735">
    <property type="term" value="F:structural constituent of ribosome"/>
    <property type="evidence" value="ECO:0007669"/>
    <property type="project" value="InterPro"/>
</dbReference>
<dbReference type="GO" id="GO:0006412">
    <property type="term" value="P:translation"/>
    <property type="evidence" value="ECO:0007669"/>
    <property type="project" value="UniProtKB-UniRule"/>
</dbReference>
<dbReference type="Gene3D" id="4.10.830.30">
    <property type="entry name" value="Ribosomal protein L31"/>
    <property type="match status" value="1"/>
</dbReference>
<dbReference type="HAMAP" id="MF_00501">
    <property type="entry name" value="Ribosomal_bL31_1"/>
    <property type="match status" value="1"/>
</dbReference>
<dbReference type="InterPro" id="IPR034704">
    <property type="entry name" value="Ribosomal_bL28/bL31-like_sf"/>
</dbReference>
<dbReference type="InterPro" id="IPR002150">
    <property type="entry name" value="Ribosomal_bL31"/>
</dbReference>
<dbReference type="InterPro" id="IPR027491">
    <property type="entry name" value="Ribosomal_bL31_A"/>
</dbReference>
<dbReference type="InterPro" id="IPR042105">
    <property type="entry name" value="Ribosomal_bL31_sf"/>
</dbReference>
<dbReference type="NCBIfam" id="TIGR00105">
    <property type="entry name" value="L31"/>
    <property type="match status" value="1"/>
</dbReference>
<dbReference type="NCBIfam" id="NF000612">
    <property type="entry name" value="PRK00019.1"/>
    <property type="match status" value="1"/>
</dbReference>
<dbReference type="NCBIfam" id="NF001809">
    <property type="entry name" value="PRK00528.1"/>
    <property type="match status" value="1"/>
</dbReference>
<dbReference type="PANTHER" id="PTHR33280">
    <property type="entry name" value="50S RIBOSOMAL PROTEIN L31, CHLOROPLASTIC"/>
    <property type="match status" value="1"/>
</dbReference>
<dbReference type="PANTHER" id="PTHR33280:SF6">
    <property type="entry name" value="LARGE RIBOSOMAL SUBUNIT PROTEIN BL31A"/>
    <property type="match status" value="1"/>
</dbReference>
<dbReference type="Pfam" id="PF01197">
    <property type="entry name" value="Ribosomal_L31"/>
    <property type="match status" value="1"/>
</dbReference>
<dbReference type="PRINTS" id="PR01249">
    <property type="entry name" value="RIBOSOMALL31"/>
</dbReference>
<dbReference type="SUPFAM" id="SSF143800">
    <property type="entry name" value="L28p-like"/>
    <property type="match status" value="1"/>
</dbReference>
<dbReference type="PROSITE" id="PS01143">
    <property type="entry name" value="RIBOSOMAL_L31"/>
    <property type="match status" value="1"/>
</dbReference>
<organism>
    <name type="scientific">Acinetobacter baumannii (strain AYE)</name>
    <dbReference type="NCBI Taxonomy" id="509173"/>
    <lineage>
        <taxon>Bacteria</taxon>
        <taxon>Pseudomonadati</taxon>
        <taxon>Pseudomonadota</taxon>
        <taxon>Gammaproteobacteria</taxon>
        <taxon>Moraxellales</taxon>
        <taxon>Moraxellaceae</taxon>
        <taxon>Acinetobacter</taxon>
        <taxon>Acinetobacter calcoaceticus/baumannii complex</taxon>
    </lineage>
</organism>
<reference key="1">
    <citation type="journal article" date="2008" name="PLoS ONE">
        <title>Comparative analysis of Acinetobacters: three genomes for three lifestyles.</title>
        <authorList>
            <person name="Vallenet D."/>
            <person name="Nordmann P."/>
            <person name="Barbe V."/>
            <person name="Poirel L."/>
            <person name="Mangenot S."/>
            <person name="Bataille E."/>
            <person name="Dossat C."/>
            <person name="Gas S."/>
            <person name="Kreimeyer A."/>
            <person name="Lenoble P."/>
            <person name="Oztas S."/>
            <person name="Poulain J."/>
            <person name="Segurens B."/>
            <person name="Robert C."/>
            <person name="Abergel C."/>
            <person name="Claverie J.-M."/>
            <person name="Raoult D."/>
            <person name="Medigue C."/>
            <person name="Weissenbach J."/>
            <person name="Cruveiller S."/>
        </authorList>
    </citation>
    <scope>NUCLEOTIDE SEQUENCE [LARGE SCALE GENOMIC DNA]</scope>
    <source>
        <strain>AYE</strain>
    </source>
</reference>